<comment type="function">
    <text evidence="1">Catalyzes the transfer of the diacylglyceryl group from phosphatidylglycerol to the sulfhydryl group of the N-terminal cysteine of a prolipoprotein, the first step in the formation of mature lipoproteins.</text>
</comment>
<comment type="catalytic activity">
    <reaction evidence="1">
        <text>L-cysteinyl-[prolipoprotein] + a 1,2-diacyl-sn-glycero-3-phospho-(1'-sn-glycerol) = an S-1,2-diacyl-sn-glyceryl-L-cysteinyl-[prolipoprotein] + sn-glycerol 1-phosphate + H(+)</text>
        <dbReference type="Rhea" id="RHEA:56712"/>
        <dbReference type="Rhea" id="RHEA-COMP:14679"/>
        <dbReference type="Rhea" id="RHEA-COMP:14680"/>
        <dbReference type="ChEBI" id="CHEBI:15378"/>
        <dbReference type="ChEBI" id="CHEBI:29950"/>
        <dbReference type="ChEBI" id="CHEBI:57685"/>
        <dbReference type="ChEBI" id="CHEBI:64716"/>
        <dbReference type="ChEBI" id="CHEBI:140658"/>
        <dbReference type="EC" id="2.5.1.145"/>
    </reaction>
</comment>
<comment type="pathway">
    <text evidence="1">Protein modification; lipoprotein biosynthesis (diacylglyceryl transfer).</text>
</comment>
<comment type="subcellular location">
    <subcellularLocation>
        <location evidence="1">Cell membrane</location>
        <topology evidence="1">Multi-pass membrane protein</topology>
    </subcellularLocation>
</comment>
<comment type="similarity">
    <text evidence="1">Belongs to the Lgt family.</text>
</comment>
<feature type="chain" id="PRO_1000164126" description="Phosphatidylglycerol--prolipoprotein diacylglyceryl transferase">
    <location>
        <begin position="1"/>
        <end position="315"/>
    </location>
</feature>
<feature type="transmembrane region" description="Helical" evidence="1">
    <location>
        <begin position="19"/>
        <end position="39"/>
    </location>
</feature>
<feature type="transmembrane region" description="Helical" evidence="1">
    <location>
        <begin position="93"/>
        <end position="113"/>
    </location>
</feature>
<feature type="transmembrane region" description="Helical" evidence="1">
    <location>
        <begin position="188"/>
        <end position="208"/>
    </location>
</feature>
<feature type="transmembrane region" description="Helical" evidence="1">
    <location>
        <begin position="256"/>
        <end position="276"/>
    </location>
</feature>
<feature type="binding site" evidence="1">
    <location>
        <position position="141"/>
    </location>
    <ligand>
        <name>a 1,2-diacyl-sn-glycero-3-phospho-(1'-sn-glycerol)</name>
        <dbReference type="ChEBI" id="CHEBI:64716"/>
    </ligand>
</feature>
<dbReference type="EC" id="2.5.1.145" evidence="1"/>
<dbReference type="EMBL" id="CP001095">
    <property type="protein sequence ID" value="ACJ52457.1"/>
    <property type="molecule type" value="Genomic_DNA"/>
</dbReference>
<dbReference type="EMBL" id="AP010889">
    <property type="protein sequence ID" value="BAJ68996.1"/>
    <property type="molecule type" value="Genomic_DNA"/>
</dbReference>
<dbReference type="RefSeq" id="WP_012577708.1">
    <property type="nucleotide sequence ID" value="NC_011593.1"/>
</dbReference>
<dbReference type="SMR" id="B7GRM7"/>
<dbReference type="KEGG" id="bln:Blon_1369"/>
<dbReference type="KEGG" id="blon:BLIJ_1413"/>
<dbReference type="PATRIC" id="fig|391904.8.peg.1422"/>
<dbReference type="HOGENOM" id="CLU_013386_2_0_11"/>
<dbReference type="UniPathway" id="UPA00664"/>
<dbReference type="Proteomes" id="UP000001360">
    <property type="component" value="Chromosome"/>
</dbReference>
<dbReference type="GO" id="GO:0005886">
    <property type="term" value="C:plasma membrane"/>
    <property type="evidence" value="ECO:0007669"/>
    <property type="project" value="UniProtKB-SubCell"/>
</dbReference>
<dbReference type="GO" id="GO:0008961">
    <property type="term" value="F:phosphatidylglycerol-prolipoprotein diacylglyceryl transferase activity"/>
    <property type="evidence" value="ECO:0007669"/>
    <property type="project" value="UniProtKB-UniRule"/>
</dbReference>
<dbReference type="GO" id="GO:0042158">
    <property type="term" value="P:lipoprotein biosynthetic process"/>
    <property type="evidence" value="ECO:0007669"/>
    <property type="project" value="UniProtKB-UniRule"/>
</dbReference>
<dbReference type="HAMAP" id="MF_01147">
    <property type="entry name" value="Lgt"/>
    <property type="match status" value="1"/>
</dbReference>
<dbReference type="InterPro" id="IPR001640">
    <property type="entry name" value="Lgt"/>
</dbReference>
<dbReference type="NCBIfam" id="TIGR00544">
    <property type="entry name" value="lgt"/>
    <property type="match status" value="1"/>
</dbReference>
<dbReference type="PANTHER" id="PTHR30589:SF0">
    <property type="entry name" value="PHOSPHATIDYLGLYCEROL--PROLIPOPROTEIN DIACYLGLYCERYL TRANSFERASE"/>
    <property type="match status" value="1"/>
</dbReference>
<dbReference type="PANTHER" id="PTHR30589">
    <property type="entry name" value="PROLIPOPROTEIN DIACYLGLYCERYL TRANSFERASE"/>
    <property type="match status" value="1"/>
</dbReference>
<dbReference type="Pfam" id="PF01790">
    <property type="entry name" value="LGT"/>
    <property type="match status" value="1"/>
</dbReference>
<dbReference type="PROSITE" id="PS01311">
    <property type="entry name" value="LGT"/>
    <property type="match status" value="1"/>
</dbReference>
<reference key="1">
    <citation type="journal article" date="2008" name="Proc. Natl. Acad. Sci. U.S.A.">
        <title>The genome sequence of Bifidobacterium longum subsp. infantis reveals adaptations for milk utilization within the infant microbiome.</title>
        <authorList>
            <person name="Sela D.A."/>
            <person name="Chapman J."/>
            <person name="Adeuya A."/>
            <person name="Kim J.H."/>
            <person name="Chen F."/>
            <person name="Whitehead T.R."/>
            <person name="Lapidus A."/>
            <person name="Rokhsar D.S."/>
            <person name="Lebrilla C.B."/>
            <person name="German J.B."/>
            <person name="Price N.P."/>
            <person name="Richardson P.M."/>
            <person name="Mills D.A."/>
        </authorList>
    </citation>
    <scope>NUCLEOTIDE SEQUENCE [LARGE SCALE GENOMIC DNA]</scope>
    <source>
        <strain>ATCC 15697 / DSM 20088 / JCM 1222 / NCTC 11817 / S12</strain>
    </source>
</reference>
<reference key="2">
    <citation type="journal article" date="2011" name="Nature">
        <title>Bifidobacteria can protect from enteropathogenic infection through production of acetate.</title>
        <authorList>
            <person name="Fukuda S."/>
            <person name="Toh H."/>
            <person name="Hase K."/>
            <person name="Oshima K."/>
            <person name="Nakanishi Y."/>
            <person name="Yoshimura K."/>
            <person name="Tobe T."/>
            <person name="Clarke J.M."/>
            <person name="Topping D.L."/>
            <person name="Suzuki T."/>
            <person name="Taylor T.D."/>
            <person name="Itoh K."/>
            <person name="Kikuchi J."/>
            <person name="Morita H."/>
            <person name="Hattori M."/>
            <person name="Ohno H."/>
        </authorList>
    </citation>
    <scope>NUCLEOTIDE SEQUENCE [LARGE SCALE GENOMIC DNA]</scope>
    <source>
        <strain>ATCC 15697 / DSM 20088 / JCM 1222 / NCTC 11817 / S12</strain>
    </source>
</reference>
<keyword id="KW-1003">Cell membrane</keyword>
<keyword id="KW-0472">Membrane</keyword>
<keyword id="KW-0808">Transferase</keyword>
<keyword id="KW-0812">Transmembrane</keyword>
<keyword id="KW-1133">Transmembrane helix</keyword>
<organism>
    <name type="scientific">Bifidobacterium longum subsp. infantis (strain ATCC 15697 / DSM 20088 / JCM 1222 / NCTC 11817 / S12)</name>
    <dbReference type="NCBI Taxonomy" id="391904"/>
    <lineage>
        <taxon>Bacteria</taxon>
        <taxon>Bacillati</taxon>
        <taxon>Actinomycetota</taxon>
        <taxon>Actinomycetes</taxon>
        <taxon>Bifidobacteriales</taxon>
        <taxon>Bifidobacteriaceae</taxon>
        <taxon>Bifidobacterium</taxon>
    </lineage>
</organism>
<protein>
    <recommendedName>
        <fullName evidence="1">Phosphatidylglycerol--prolipoprotein diacylglyceryl transferase</fullName>
        <ecNumber evidence="1">2.5.1.145</ecNumber>
    </recommendedName>
</protein>
<accession>B7GRM7</accession>
<accession>E8MKB9</accession>
<sequence length="315" mass="35501">MNLAYIPSPTFSKFEIGPFTIHMYAICILIGICVAVWILTTRWKRYGGTFDQILDTTLVTVPCALVGARLYHCITTPADYFPPTGNLVNILKVWEGGMAIFGGISVGTLVAFLWCRHKHYPFAIFADAIAPALPVAQAIGRLGNWFNQELYGWPTTLPWGLKLNDADAIGKSEICYSGAQCPDYRTTLFHPTFLYEMIWNLIGAALIIYLGHKLADRLKAGQQFAMYLMWYGLGRTWIENVRINYSTVILGLRTNMWTAIIVFVLGCILFVVLYQYGPDPKAQARGLAAVTADELERQSIEEERLRQKKQAKRTK</sequence>
<proteinExistence type="inferred from homology"/>
<gene>
    <name evidence="1" type="primary">lgt</name>
    <name type="ordered locus">Blon_1369</name>
    <name type="ordered locus">BLIJ_1413</name>
</gene>
<name>LGT_BIFLS</name>
<evidence type="ECO:0000255" key="1">
    <source>
        <dbReference type="HAMAP-Rule" id="MF_01147"/>
    </source>
</evidence>